<proteinExistence type="inferred from homology"/>
<comment type="function">
    <text evidence="1">Catalyzes the hydrolytic cleavage of the carbon-nitrogen bond in imidazolone-5-propanoate to yield N-formimidoyl-L-glutamate. It is the third step in the universal histidine degradation pathway.</text>
</comment>
<comment type="catalytic activity">
    <reaction evidence="1">
        <text>4-imidazolone-5-propanoate + H2O = N-formimidoyl-L-glutamate</text>
        <dbReference type="Rhea" id="RHEA:23660"/>
        <dbReference type="ChEBI" id="CHEBI:15377"/>
        <dbReference type="ChEBI" id="CHEBI:58928"/>
        <dbReference type="ChEBI" id="CHEBI:77893"/>
        <dbReference type="EC" id="3.5.2.7"/>
    </reaction>
</comment>
<comment type="cofactor">
    <cofactor evidence="1">
        <name>Zn(2+)</name>
        <dbReference type="ChEBI" id="CHEBI:29105"/>
    </cofactor>
    <cofactor evidence="1">
        <name>Fe(3+)</name>
        <dbReference type="ChEBI" id="CHEBI:29034"/>
    </cofactor>
    <text evidence="1">Binds 1 zinc or iron ion per subunit.</text>
</comment>
<comment type="pathway">
    <text evidence="1">Amino-acid degradation; L-histidine degradation into L-glutamate; N-formimidoyl-L-glutamate from L-histidine: step 3/3.</text>
</comment>
<comment type="subcellular location">
    <subcellularLocation>
        <location evidence="1">Cytoplasm</location>
    </subcellularLocation>
</comment>
<comment type="similarity">
    <text evidence="1">Belongs to the metallo-dependent hydrolases superfamily. HutI family.</text>
</comment>
<sequence>MTADLLLTHFNQVFCPKDLGHPLFGEEMKEAQVLEDGYIAVKDGKILAVGSGEPDASLVGPDTKIQSYEGKIATPGLIDCHTHLVYGGSREHEFAKKLAGVPYLEILAQGGGILSTVRATREASFDTLYDKSRRLLDYMLLHGVTTVEAKSGYGLDWETEKRQLDVVGALDRDHEIDLVSTFMAAHAVPPEYKGRSQEYLELIVEEMLPRVKAENLAEFCDIFCEKGVFTADESRYLLSKAKEMGFKLRIHADEIESIGGVDVAAELGATSAEHLMVATDEGIRKMAEAKVIGNLLPATTFSLMEDTYAPARKMLEAGMAITLTTDSNPGSCPTANLQFVMQLGCFMMRLTPVEVLNAVTINAAYSVNRQDKIGSFDTGKQADITILDAKNIDYPLYFFATNLTHQVYKAGKLVVDQGRIV</sequence>
<gene>
    <name evidence="1" type="primary">hutI</name>
    <name type="ordered locus">SSA_0436</name>
</gene>
<keyword id="KW-0963">Cytoplasm</keyword>
<keyword id="KW-0369">Histidine metabolism</keyword>
<keyword id="KW-0378">Hydrolase</keyword>
<keyword id="KW-0408">Iron</keyword>
<keyword id="KW-0479">Metal-binding</keyword>
<keyword id="KW-1185">Reference proteome</keyword>
<keyword id="KW-0862">Zinc</keyword>
<evidence type="ECO:0000255" key="1">
    <source>
        <dbReference type="HAMAP-Rule" id="MF_00372"/>
    </source>
</evidence>
<reference key="1">
    <citation type="journal article" date="2007" name="J. Bacteriol.">
        <title>Genome of the opportunistic pathogen Streptococcus sanguinis.</title>
        <authorList>
            <person name="Xu P."/>
            <person name="Alves J.M."/>
            <person name="Kitten T."/>
            <person name="Brown A."/>
            <person name="Chen Z."/>
            <person name="Ozaki L.S."/>
            <person name="Manque P."/>
            <person name="Ge X."/>
            <person name="Serrano M.G."/>
            <person name="Puiu D."/>
            <person name="Hendricks S."/>
            <person name="Wang Y."/>
            <person name="Chaplin M.D."/>
            <person name="Akan D."/>
            <person name="Paik S."/>
            <person name="Peterson D.L."/>
            <person name="Macrina F.L."/>
            <person name="Buck G.A."/>
        </authorList>
    </citation>
    <scope>NUCLEOTIDE SEQUENCE [LARGE SCALE GENOMIC DNA]</scope>
    <source>
        <strain>SK36</strain>
    </source>
</reference>
<accession>A3CL31</accession>
<protein>
    <recommendedName>
        <fullName evidence="1">Imidazolonepropionase</fullName>
        <ecNumber evidence="1">3.5.2.7</ecNumber>
    </recommendedName>
    <alternativeName>
        <fullName evidence="1">Imidazolone-5-propionate hydrolase</fullName>
    </alternativeName>
</protein>
<feature type="chain" id="PRO_0000306528" description="Imidazolonepropionase">
    <location>
        <begin position="1"/>
        <end position="421"/>
    </location>
</feature>
<feature type="binding site" evidence="1">
    <location>
        <position position="81"/>
    </location>
    <ligand>
        <name>Fe(3+)</name>
        <dbReference type="ChEBI" id="CHEBI:29034"/>
    </ligand>
</feature>
<feature type="binding site" evidence="1">
    <location>
        <position position="81"/>
    </location>
    <ligand>
        <name>Zn(2+)</name>
        <dbReference type="ChEBI" id="CHEBI:29105"/>
    </ligand>
</feature>
<feature type="binding site" evidence="1">
    <location>
        <position position="83"/>
    </location>
    <ligand>
        <name>Fe(3+)</name>
        <dbReference type="ChEBI" id="CHEBI:29034"/>
    </ligand>
</feature>
<feature type="binding site" evidence="1">
    <location>
        <position position="83"/>
    </location>
    <ligand>
        <name>Zn(2+)</name>
        <dbReference type="ChEBI" id="CHEBI:29105"/>
    </ligand>
</feature>
<feature type="binding site" evidence="1">
    <location>
        <position position="90"/>
    </location>
    <ligand>
        <name>4-imidazolone-5-propanoate</name>
        <dbReference type="ChEBI" id="CHEBI:77893"/>
    </ligand>
</feature>
<feature type="binding site" evidence="1">
    <location>
        <position position="153"/>
    </location>
    <ligand>
        <name>4-imidazolone-5-propanoate</name>
        <dbReference type="ChEBI" id="CHEBI:77893"/>
    </ligand>
</feature>
<feature type="binding site" evidence="1">
    <location>
        <position position="153"/>
    </location>
    <ligand>
        <name>N-formimidoyl-L-glutamate</name>
        <dbReference type="ChEBI" id="CHEBI:58928"/>
    </ligand>
</feature>
<feature type="binding site" evidence="1">
    <location>
        <position position="186"/>
    </location>
    <ligand>
        <name>4-imidazolone-5-propanoate</name>
        <dbReference type="ChEBI" id="CHEBI:77893"/>
    </ligand>
</feature>
<feature type="binding site" evidence="1">
    <location>
        <position position="251"/>
    </location>
    <ligand>
        <name>Fe(3+)</name>
        <dbReference type="ChEBI" id="CHEBI:29034"/>
    </ligand>
</feature>
<feature type="binding site" evidence="1">
    <location>
        <position position="251"/>
    </location>
    <ligand>
        <name>Zn(2+)</name>
        <dbReference type="ChEBI" id="CHEBI:29105"/>
    </ligand>
</feature>
<feature type="binding site" evidence="1">
    <location>
        <position position="254"/>
    </location>
    <ligand>
        <name>4-imidazolone-5-propanoate</name>
        <dbReference type="ChEBI" id="CHEBI:77893"/>
    </ligand>
</feature>
<feature type="binding site" evidence="1">
    <location>
        <position position="326"/>
    </location>
    <ligand>
        <name>Fe(3+)</name>
        <dbReference type="ChEBI" id="CHEBI:29034"/>
    </ligand>
</feature>
<feature type="binding site" evidence="1">
    <location>
        <position position="326"/>
    </location>
    <ligand>
        <name>Zn(2+)</name>
        <dbReference type="ChEBI" id="CHEBI:29105"/>
    </ligand>
</feature>
<feature type="binding site" evidence="1">
    <location>
        <position position="328"/>
    </location>
    <ligand>
        <name>N-formimidoyl-L-glutamate</name>
        <dbReference type="ChEBI" id="CHEBI:58928"/>
    </ligand>
</feature>
<feature type="binding site" evidence="1">
    <location>
        <position position="330"/>
    </location>
    <ligand>
        <name>N-formimidoyl-L-glutamate</name>
        <dbReference type="ChEBI" id="CHEBI:58928"/>
    </ligand>
</feature>
<feature type="binding site" evidence="1">
    <location>
        <position position="331"/>
    </location>
    <ligand>
        <name>4-imidazolone-5-propanoate</name>
        <dbReference type="ChEBI" id="CHEBI:77893"/>
    </ligand>
</feature>
<dbReference type="EC" id="3.5.2.7" evidence="1"/>
<dbReference type="EMBL" id="CP000387">
    <property type="protein sequence ID" value="ABN43886.1"/>
    <property type="molecule type" value="Genomic_DNA"/>
</dbReference>
<dbReference type="RefSeq" id="WP_011836513.1">
    <property type="nucleotide sequence ID" value="NC_009009.1"/>
</dbReference>
<dbReference type="RefSeq" id="YP_001034436.1">
    <property type="nucleotide sequence ID" value="NC_009009.1"/>
</dbReference>
<dbReference type="SMR" id="A3CL31"/>
<dbReference type="STRING" id="388919.SSA_0436"/>
<dbReference type="KEGG" id="ssa:SSA_0436"/>
<dbReference type="PATRIC" id="fig|388919.9.peg.422"/>
<dbReference type="eggNOG" id="COG1228">
    <property type="taxonomic scope" value="Bacteria"/>
</dbReference>
<dbReference type="HOGENOM" id="CLU_041647_0_1_9"/>
<dbReference type="OrthoDB" id="9776455at2"/>
<dbReference type="UniPathway" id="UPA00379">
    <property type="reaction ID" value="UER00551"/>
</dbReference>
<dbReference type="Proteomes" id="UP000002148">
    <property type="component" value="Chromosome"/>
</dbReference>
<dbReference type="GO" id="GO:0005737">
    <property type="term" value="C:cytoplasm"/>
    <property type="evidence" value="ECO:0007669"/>
    <property type="project" value="UniProtKB-SubCell"/>
</dbReference>
<dbReference type="GO" id="GO:0050480">
    <property type="term" value="F:imidazolonepropionase activity"/>
    <property type="evidence" value="ECO:0007669"/>
    <property type="project" value="UniProtKB-UniRule"/>
</dbReference>
<dbReference type="GO" id="GO:0005506">
    <property type="term" value="F:iron ion binding"/>
    <property type="evidence" value="ECO:0007669"/>
    <property type="project" value="UniProtKB-UniRule"/>
</dbReference>
<dbReference type="GO" id="GO:0008270">
    <property type="term" value="F:zinc ion binding"/>
    <property type="evidence" value="ECO:0007669"/>
    <property type="project" value="UniProtKB-UniRule"/>
</dbReference>
<dbReference type="GO" id="GO:0019556">
    <property type="term" value="P:L-histidine catabolic process to glutamate and formamide"/>
    <property type="evidence" value="ECO:0007669"/>
    <property type="project" value="UniProtKB-UniPathway"/>
</dbReference>
<dbReference type="GO" id="GO:0019557">
    <property type="term" value="P:L-histidine catabolic process to glutamate and formate"/>
    <property type="evidence" value="ECO:0007669"/>
    <property type="project" value="UniProtKB-UniPathway"/>
</dbReference>
<dbReference type="CDD" id="cd01296">
    <property type="entry name" value="Imidazolone-5PH"/>
    <property type="match status" value="1"/>
</dbReference>
<dbReference type="FunFam" id="3.20.20.140:FF:000007">
    <property type="entry name" value="Imidazolonepropionase"/>
    <property type="match status" value="1"/>
</dbReference>
<dbReference type="Gene3D" id="3.20.20.140">
    <property type="entry name" value="Metal-dependent hydrolases"/>
    <property type="match status" value="1"/>
</dbReference>
<dbReference type="Gene3D" id="2.30.40.10">
    <property type="entry name" value="Urease, subunit C, domain 1"/>
    <property type="match status" value="1"/>
</dbReference>
<dbReference type="HAMAP" id="MF_00372">
    <property type="entry name" value="HutI"/>
    <property type="match status" value="1"/>
</dbReference>
<dbReference type="InterPro" id="IPR006680">
    <property type="entry name" value="Amidohydro-rel"/>
</dbReference>
<dbReference type="InterPro" id="IPR005920">
    <property type="entry name" value="HutI"/>
</dbReference>
<dbReference type="InterPro" id="IPR011059">
    <property type="entry name" value="Metal-dep_hydrolase_composite"/>
</dbReference>
<dbReference type="InterPro" id="IPR032466">
    <property type="entry name" value="Metal_Hydrolase"/>
</dbReference>
<dbReference type="NCBIfam" id="TIGR01224">
    <property type="entry name" value="hutI"/>
    <property type="match status" value="1"/>
</dbReference>
<dbReference type="PANTHER" id="PTHR42752">
    <property type="entry name" value="IMIDAZOLONEPROPIONASE"/>
    <property type="match status" value="1"/>
</dbReference>
<dbReference type="PANTHER" id="PTHR42752:SF1">
    <property type="entry name" value="IMIDAZOLONEPROPIONASE-RELATED"/>
    <property type="match status" value="1"/>
</dbReference>
<dbReference type="Pfam" id="PF01979">
    <property type="entry name" value="Amidohydro_1"/>
    <property type="match status" value="1"/>
</dbReference>
<dbReference type="SUPFAM" id="SSF51338">
    <property type="entry name" value="Composite domain of metallo-dependent hydrolases"/>
    <property type="match status" value="1"/>
</dbReference>
<dbReference type="SUPFAM" id="SSF51556">
    <property type="entry name" value="Metallo-dependent hydrolases"/>
    <property type="match status" value="1"/>
</dbReference>
<organism>
    <name type="scientific">Streptococcus sanguinis (strain SK36)</name>
    <dbReference type="NCBI Taxonomy" id="388919"/>
    <lineage>
        <taxon>Bacteria</taxon>
        <taxon>Bacillati</taxon>
        <taxon>Bacillota</taxon>
        <taxon>Bacilli</taxon>
        <taxon>Lactobacillales</taxon>
        <taxon>Streptococcaceae</taxon>
        <taxon>Streptococcus</taxon>
    </lineage>
</organism>
<name>HUTI_STRSV</name>